<name>RL16_LACJO</name>
<reference key="1">
    <citation type="journal article" date="2004" name="Proc. Natl. Acad. Sci. U.S.A.">
        <title>The genome sequence of the probiotic intestinal bacterium Lactobacillus johnsonii NCC 533.</title>
        <authorList>
            <person name="Pridmore R.D."/>
            <person name="Berger B."/>
            <person name="Desiere F."/>
            <person name="Vilanova D."/>
            <person name="Barretto C."/>
            <person name="Pittet A.-C."/>
            <person name="Zwahlen M.-C."/>
            <person name="Rouvet M."/>
            <person name="Altermann E."/>
            <person name="Barrangou R."/>
            <person name="Mollet B."/>
            <person name="Mercenier A."/>
            <person name="Klaenhammer T."/>
            <person name="Arigoni F."/>
            <person name="Schell M.A."/>
        </authorList>
    </citation>
    <scope>NUCLEOTIDE SEQUENCE [LARGE SCALE GENOMIC DNA]</scope>
    <source>
        <strain>CNCM I-1225 / La1 / NCC 533</strain>
    </source>
</reference>
<evidence type="ECO:0000255" key="1">
    <source>
        <dbReference type="HAMAP-Rule" id="MF_01342"/>
    </source>
</evidence>
<evidence type="ECO:0000305" key="2"/>
<organism>
    <name type="scientific">Lactobacillus johnsonii (strain CNCM I-12250 / La1 / NCC 533)</name>
    <dbReference type="NCBI Taxonomy" id="257314"/>
    <lineage>
        <taxon>Bacteria</taxon>
        <taxon>Bacillati</taxon>
        <taxon>Bacillota</taxon>
        <taxon>Bacilli</taxon>
        <taxon>Lactobacillales</taxon>
        <taxon>Lactobacillaceae</taxon>
        <taxon>Lactobacillus</taxon>
    </lineage>
</organism>
<sequence length="145" mass="16005">MLVPKRVKHRREFRGKMRGEAKGGKTIAFGEYGLEAVESHWITNRQIEAARIAMTRFMKRGGKVWIRIFPQKSYTAKGVGVRMGSGKGAPAGWVAVVKRGKIMFEIGGVSEDVAREALRLASNKLPIKTKFVKKSSEVGGESNEG</sequence>
<keyword id="KW-0687">Ribonucleoprotein</keyword>
<keyword id="KW-0689">Ribosomal protein</keyword>
<keyword id="KW-0694">RNA-binding</keyword>
<keyword id="KW-0699">rRNA-binding</keyword>
<keyword id="KW-0820">tRNA-binding</keyword>
<feature type="chain" id="PRO_0000062119" description="Large ribosomal subunit protein uL16">
    <location>
        <begin position="1"/>
        <end position="145"/>
    </location>
</feature>
<protein>
    <recommendedName>
        <fullName evidence="1">Large ribosomal subunit protein uL16</fullName>
    </recommendedName>
    <alternativeName>
        <fullName evidence="2">50S ribosomal protein L16</fullName>
    </alternativeName>
</protein>
<dbReference type="EMBL" id="AE017198">
    <property type="protein sequence ID" value="AAS08332.1"/>
    <property type="molecule type" value="Genomic_DNA"/>
</dbReference>
<dbReference type="RefSeq" id="WP_004895865.1">
    <property type="nucleotide sequence ID" value="NC_005362.1"/>
</dbReference>
<dbReference type="SMR" id="Q74L82"/>
<dbReference type="GeneID" id="83569761"/>
<dbReference type="KEGG" id="ljo:LJ_0346"/>
<dbReference type="eggNOG" id="COG0197">
    <property type="taxonomic scope" value="Bacteria"/>
</dbReference>
<dbReference type="HOGENOM" id="CLU_078858_2_1_9"/>
<dbReference type="Proteomes" id="UP000000581">
    <property type="component" value="Chromosome"/>
</dbReference>
<dbReference type="GO" id="GO:0022625">
    <property type="term" value="C:cytosolic large ribosomal subunit"/>
    <property type="evidence" value="ECO:0007669"/>
    <property type="project" value="TreeGrafter"/>
</dbReference>
<dbReference type="GO" id="GO:0019843">
    <property type="term" value="F:rRNA binding"/>
    <property type="evidence" value="ECO:0007669"/>
    <property type="project" value="UniProtKB-UniRule"/>
</dbReference>
<dbReference type="GO" id="GO:0003735">
    <property type="term" value="F:structural constituent of ribosome"/>
    <property type="evidence" value="ECO:0007669"/>
    <property type="project" value="InterPro"/>
</dbReference>
<dbReference type="GO" id="GO:0000049">
    <property type="term" value="F:tRNA binding"/>
    <property type="evidence" value="ECO:0007669"/>
    <property type="project" value="UniProtKB-KW"/>
</dbReference>
<dbReference type="GO" id="GO:0006412">
    <property type="term" value="P:translation"/>
    <property type="evidence" value="ECO:0007669"/>
    <property type="project" value="UniProtKB-UniRule"/>
</dbReference>
<dbReference type="CDD" id="cd01433">
    <property type="entry name" value="Ribosomal_L16_L10e"/>
    <property type="match status" value="1"/>
</dbReference>
<dbReference type="FunFam" id="3.90.1170.10:FF:000001">
    <property type="entry name" value="50S ribosomal protein L16"/>
    <property type="match status" value="1"/>
</dbReference>
<dbReference type="Gene3D" id="3.90.1170.10">
    <property type="entry name" value="Ribosomal protein L10e/L16"/>
    <property type="match status" value="1"/>
</dbReference>
<dbReference type="HAMAP" id="MF_01342">
    <property type="entry name" value="Ribosomal_uL16"/>
    <property type="match status" value="1"/>
</dbReference>
<dbReference type="InterPro" id="IPR047873">
    <property type="entry name" value="Ribosomal_uL16"/>
</dbReference>
<dbReference type="InterPro" id="IPR000114">
    <property type="entry name" value="Ribosomal_uL16_bact-type"/>
</dbReference>
<dbReference type="InterPro" id="IPR020798">
    <property type="entry name" value="Ribosomal_uL16_CS"/>
</dbReference>
<dbReference type="InterPro" id="IPR016180">
    <property type="entry name" value="Ribosomal_uL16_dom"/>
</dbReference>
<dbReference type="InterPro" id="IPR036920">
    <property type="entry name" value="Ribosomal_uL16_sf"/>
</dbReference>
<dbReference type="NCBIfam" id="TIGR01164">
    <property type="entry name" value="rplP_bact"/>
    <property type="match status" value="1"/>
</dbReference>
<dbReference type="PANTHER" id="PTHR12220">
    <property type="entry name" value="50S/60S RIBOSOMAL PROTEIN L16"/>
    <property type="match status" value="1"/>
</dbReference>
<dbReference type="PANTHER" id="PTHR12220:SF13">
    <property type="entry name" value="LARGE RIBOSOMAL SUBUNIT PROTEIN UL16M"/>
    <property type="match status" value="1"/>
</dbReference>
<dbReference type="Pfam" id="PF00252">
    <property type="entry name" value="Ribosomal_L16"/>
    <property type="match status" value="1"/>
</dbReference>
<dbReference type="PRINTS" id="PR00060">
    <property type="entry name" value="RIBOSOMALL16"/>
</dbReference>
<dbReference type="SUPFAM" id="SSF54686">
    <property type="entry name" value="Ribosomal protein L16p/L10e"/>
    <property type="match status" value="1"/>
</dbReference>
<dbReference type="PROSITE" id="PS00586">
    <property type="entry name" value="RIBOSOMAL_L16_1"/>
    <property type="match status" value="1"/>
</dbReference>
<dbReference type="PROSITE" id="PS00701">
    <property type="entry name" value="RIBOSOMAL_L16_2"/>
    <property type="match status" value="1"/>
</dbReference>
<comment type="function">
    <text evidence="1">Binds 23S rRNA and is also seen to make contacts with the A and possibly P site tRNAs.</text>
</comment>
<comment type="subunit">
    <text evidence="1">Part of the 50S ribosomal subunit.</text>
</comment>
<comment type="similarity">
    <text evidence="1">Belongs to the universal ribosomal protein uL16 family.</text>
</comment>
<gene>
    <name evidence="1" type="primary">rplP</name>
    <name type="ordered locus">LJ_0346</name>
</gene>
<proteinExistence type="inferred from homology"/>
<accession>Q74L82</accession>